<dbReference type="EMBL" id="CP001052">
    <property type="protein sequence ID" value="ACD17839.1"/>
    <property type="molecule type" value="Genomic_DNA"/>
</dbReference>
<dbReference type="RefSeq" id="WP_007180329.1">
    <property type="nucleotide sequence ID" value="NC_010681.1"/>
</dbReference>
<dbReference type="SMR" id="B2SYV4"/>
<dbReference type="STRING" id="398527.Bphyt_3449"/>
<dbReference type="GeneID" id="97303687"/>
<dbReference type="KEGG" id="bpy:Bphyt_3449"/>
<dbReference type="eggNOG" id="COG0261">
    <property type="taxonomic scope" value="Bacteria"/>
</dbReference>
<dbReference type="HOGENOM" id="CLU_061463_3_1_4"/>
<dbReference type="OrthoDB" id="9813334at2"/>
<dbReference type="Proteomes" id="UP000001739">
    <property type="component" value="Chromosome 1"/>
</dbReference>
<dbReference type="GO" id="GO:0005737">
    <property type="term" value="C:cytoplasm"/>
    <property type="evidence" value="ECO:0007669"/>
    <property type="project" value="UniProtKB-ARBA"/>
</dbReference>
<dbReference type="GO" id="GO:1990904">
    <property type="term" value="C:ribonucleoprotein complex"/>
    <property type="evidence" value="ECO:0007669"/>
    <property type="project" value="UniProtKB-KW"/>
</dbReference>
<dbReference type="GO" id="GO:0005840">
    <property type="term" value="C:ribosome"/>
    <property type="evidence" value="ECO:0007669"/>
    <property type="project" value="UniProtKB-KW"/>
</dbReference>
<dbReference type="GO" id="GO:0019843">
    <property type="term" value="F:rRNA binding"/>
    <property type="evidence" value="ECO:0007669"/>
    <property type="project" value="UniProtKB-UniRule"/>
</dbReference>
<dbReference type="GO" id="GO:0003735">
    <property type="term" value="F:structural constituent of ribosome"/>
    <property type="evidence" value="ECO:0007669"/>
    <property type="project" value="InterPro"/>
</dbReference>
<dbReference type="GO" id="GO:0006412">
    <property type="term" value="P:translation"/>
    <property type="evidence" value="ECO:0007669"/>
    <property type="project" value="UniProtKB-UniRule"/>
</dbReference>
<dbReference type="HAMAP" id="MF_01363">
    <property type="entry name" value="Ribosomal_bL21"/>
    <property type="match status" value="1"/>
</dbReference>
<dbReference type="InterPro" id="IPR028909">
    <property type="entry name" value="bL21-like"/>
</dbReference>
<dbReference type="InterPro" id="IPR036164">
    <property type="entry name" value="bL21-like_sf"/>
</dbReference>
<dbReference type="InterPro" id="IPR001787">
    <property type="entry name" value="Ribosomal_bL21"/>
</dbReference>
<dbReference type="InterPro" id="IPR018258">
    <property type="entry name" value="Ribosomal_bL21_CS"/>
</dbReference>
<dbReference type="NCBIfam" id="TIGR00061">
    <property type="entry name" value="L21"/>
    <property type="match status" value="1"/>
</dbReference>
<dbReference type="PANTHER" id="PTHR21349">
    <property type="entry name" value="50S RIBOSOMAL PROTEIN L21"/>
    <property type="match status" value="1"/>
</dbReference>
<dbReference type="PANTHER" id="PTHR21349:SF0">
    <property type="entry name" value="LARGE RIBOSOMAL SUBUNIT PROTEIN BL21M"/>
    <property type="match status" value="1"/>
</dbReference>
<dbReference type="Pfam" id="PF00829">
    <property type="entry name" value="Ribosomal_L21p"/>
    <property type="match status" value="1"/>
</dbReference>
<dbReference type="SUPFAM" id="SSF141091">
    <property type="entry name" value="L21p-like"/>
    <property type="match status" value="1"/>
</dbReference>
<dbReference type="PROSITE" id="PS01169">
    <property type="entry name" value="RIBOSOMAL_L21"/>
    <property type="match status" value="1"/>
</dbReference>
<keyword id="KW-0687">Ribonucleoprotein</keyword>
<keyword id="KW-0689">Ribosomal protein</keyword>
<keyword id="KW-0694">RNA-binding</keyword>
<keyword id="KW-0699">rRNA-binding</keyword>
<feature type="chain" id="PRO_1000143768" description="Large ribosomal subunit protein bL21">
    <location>
        <begin position="1"/>
        <end position="103"/>
    </location>
</feature>
<proteinExistence type="inferred from homology"/>
<reference key="1">
    <citation type="journal article" date="2011" name="J. Bacteriol.">
        <title>Complete genome sequence of the plant growth-promoting endophyte Burkholderia phytofirmans strain PsJN.</title>
        <authorList>
            <person name="Weilharter A."/>
            <person name="Mitter B."/>
            <person name="Shin M.V."/>
            <person name="Chain P.S."/>
            <person name="Nowak J."/>
            <person name="Sessitsch A."/>
        </authorList>
    </citation>
    <scope>NUCLEOTIDE SEQUENCE [LARGE SCALE GENOMIC DNA]</scope>
    <source>
        <strain>DSM 17436 / LMG 22146 / PsJN</strain>
    </source>
</reference>
<comment type="function">
    <text evidence="1">This protein binds to 23S rRNA in the presence of protein L20.</text>
</comment>
<comment type="subunit">
    <text evidence="1">Part of the 50S ribosomal subunit. Contacts protein L20.</text>
</comment>
<comment type="similarity">
    <text evidence="1">Belongs to the bacterial ribosomal protein bL21 family.</text>
</comment>
<name>RL21_PARPJ</name>
<evidence type="ECO:0000255" key="1">
    <source>
        <dbReference type="HAMAP-Rule" id="MF_01363"/>
    </source>
</evidence>
<evidence type="ECO:0000305" key="2"/>
<organism>
    <name type="scientific">Paraburkholderia phytofirmans (strain DSM 17436 / LMG 22146 / PsJN)</name>
    <name type="common">Burkholderia phytofirmans</name>
    <dbReference type="NCBI Taxonomy" id="398527"/>
    <lineage>
        <taxon>Bacteria</taxon>
        <taxon>Pseudomonadati</taxon>
        <taxon>Pseudomonadota</taxon>
        <taxon>Betaproteobacteria</taxon>
        <taxon>Burkholderiales</taxon>
        <taxon>Burkholderiaceae</taxon>
        <taxon>Paraburkholderia</taxon>
    </lineage>
</organism>
<protein>
    <recommendedName>
        <fullName evidence="1">Large ribosomal subunit protein bL21</fullName>
    </recommendedName>
    <alternativeName>
        <fullName evidence="2">50S ribosomal protein L21</fullName>
    </alternativeName>
</protein>
<sequence>MYAVIKTGGKQYKVAVGEKLKVEQIPADIDAEITLDQVLAVGEGESIKFGTPLVSGASVKATVVSQGRHAKVTIFKMRRRKHYQKHGGHRQNYTELRIDAINA</sequence>
<accession>B2SYV4</accession>
<gene>
    <name evidence="1" type="primary">rplU</name>
    <name type="ordered locus">Bphyt_3449</name>
</gene>